<reference key="1">
    <citation type="journal article" date="2002" name="Nature">
        <title>Complete genome sequence of the model actinomycete Streptomyces coelicolor A3(2).</title>
        <authorList>
            <person name="Bentley S.D."/>
            <person name="Chater K.F."/>
            <person name="Cerdeno-Tarraga A.-M."/>
            <person name="Challis G.L."/>
            <person name="Thomson N.R."/>
            <person name="James K.D."/>
            <person name="Harris D.E."/>
            <person name="Quail M.A."/>
            <person name="Kieser H."/>
            <person name="Harper D."/>
            <person name="Bateman A."/>
            <person name="Brown S."/>
            <person name="Chandra G."/>
            <person name="Chen C.W."/>
            <person name="Collins M."/>
            <person name="Cronin A."/>
            <person name="Fraser A."/>
            <person name="Goble A."/>
            <person name="Hidalgo J."/>
            <person name="Hornsby T."/>
            <person name="Howarth S."/>
            <person name="Huang C.-H."/>
            <person name="Kieser T."/>
            <person name="Larke L."/>
            <person name="Murphy L.D."/>
            <person name="Oliver K."/>
            <person name="O'Neil S."/>
            <person name="Rabbinowitsch E."/>
            <person name="Rajandream M.A."/>
            <person name="Rutherford K.M."/>
            <person name="Rutter S."/>
            <person name="Seeger K."/>
            <person name="Saunders D."/>
            <person name="Sharp S."/>
            <person name="Squares R."/>
            <person name="Squares S."/>
            <person name="Taylor K."/>
            <person name="Warren T."/>
            <person name="Wietzorrek A."/>
            <person name="Woodward J.R."/>
            <person name="Barrell B.G."/>
            <person name="Parkhill J."/>
            <person name="Hopwood D.A."/>
        </authorList>
    </citation>
    <scope>NUCLEOTIDE SEQUENCE [LARGE SCALE GENOMIC DNA]</scope>
    <source>
        <strain>ATCC BAA-471 / A3(2) / M145</strain>
    </source>
</reference>
<reference key="2">
    <citation type="journal article" date="2013" name="J. Mol. Biol.">
        <title>SCO4008, a putative TetR transcriptional repressor from Streptomyces coelicolor A3(2), regulates transcription of sco4007 by multidrug recognition.</title>
        <authorList>
            <person name="Hayashi T."/>
            <person name="Tanaka Y."/>
            <person name="Sakai N."/>
            <person name="Okada U."/>
            <person name="Yao M."/>
            <person name="Watanabe N."/>
            <person name="Tamura T."/>
            <person name="Tanaka I."/>
        </authorList>
    </citation>
    <scope>INDUCTION</scope>
    <source>
        <strain>ATCC BAA-471 / A3(2) / M145</strain>
    </source>
</reference>
<comment type="subcellular location">
    <subcellularLocation>
        <location evidence="3">Cell membrane</location>
        <topology evidence="3">Multi-pass membrane protein</topology>
    </subcellularLocation>
</comment>
<comment type="induction">
    <text evidence="4">Transcriptionally regulated by SCO4008.</text>
</comment>
<comment type="similarity">
    <text evidence="3">Belongs to the major facilitator superfamily.</text>
</comment>
<accession>Q9ADP8</accession>
<protein>
    <recommendedName>
        <fullName>Probable transporter SCO4007</fullName>
    </recommendedName>
</protein>
<keyword id="KW-1003">Cell membrane</keyword>
<keyword id="KW-0472">Membrane</keyword>
<keyword id="KW-1185">Reference proteome</keyword>
<keyword id="KW-0812">Transmembrane</keyword>
<keyword id="KW-1133">Transmembrane helix</keyword>
<keyword id="KW-0813">Transport</keyword>
<name>Y4007_STRCO</name>
<organism>
    <name type="scientific">Streptomyces coelicolor (strain ATCC BAA-471 / A3(2) / M145)</name>
    <dbReference type="NCBI Taxonomy" id="100226"/>
    <lineage>
        <taxon>Bacteria</taxon>
        <taxon>Bacillati</taxon>
        <taxon>Actinomycetota</taxon>
        <taxon>Actinomycetes</taxon>
        <taxon>Kitasatosporales</taxon>
        <taxon>Streptomycetaceae</taxon>
        <taxon>Streptomyces</taxon>
        <taxon>Streptomyces albidoflavus group</taxon>
    </lineage>
</organism>
<feature type="chain" id="PRO_0000426731" description="Probable transporter SCO4007">
    <location>
        <begin position="1"/>
        <end position="430"/>
    </location>
</feature>
<feature type="transmembrane region" description="Helical" evidence="1">
    <location>
        <begin position="34"/>
        <end position="54"/>
    </location>
</feature>
<feature type="transmembrane region" description="Helical" evidence="1">
    <location>
        <begin position="70"/>
        <end position="90"/>
    </location>
</feature>
<feature type="transmembrane region" description="Helical" evidence="1">
    <location>
        <begin position="101"/>
        <end position="121"/>
    </location>
</feature>
<feature type="transmembrane region" description="Helical" evidence="1">
    <location>
        <begin position="126"/>
        <end position="146"/>
    </location>
</feature>
<feature type="transmembrane region" description="Helical" evidence="1">
    <location>
        <begin position="159"/>
        <end position="179"/>
    </location>
</feature>
<feature type="transmembrane region" description="Helical" evidence="1">
    <location>
        <begin position="188"/>
        <end position="208"/>
    </location>
</feature>
<feature type="transmembrane region" description="Helical" evidence="1">
    <location>
        <begin position="244"/>
        <end position="264"/>
    </location>
</feature>
<feature type="transmembrane region" description="Helical" evidence="1">
    <location>
        <begin position="275"/>
        <end position="295"/>
    </location>
</feature>
<feature type="transmembrane region" description="Helical" evidence="1">
    <location>
        <begin position="315"/>
        <end position="335"/>
    </location>
</feature>
<feature type="transmembrane region" description="Helical" evidence="1">
    <location>
        <begin position="362"/>
        <end position="382"/>
    </location>
</feature>
<feature type="transmembrane region" description="Helical" evidence="1">
    <location>
        <begin position="383"/>
        <end position="403"/>
    </location>
</feature>
<feature type="region of interest" description="Disordered" evidence="2">
    <location>
        <begin position="1"/>
        <end position="26"/>
    </location>
</feature>
<feature type="compositionally biased region" description="Low complexity" evidence="2">
    <location>
        <begin position="1"/>
        <end position="17"/>
    </location>
</feature>
<evidence type="ECO:0000255" key="1"/>
<evidence type="ECO:0000256" key="2">
    <source>
        <dbReference type="SAM" id="MobiDB-lite"/>
    </source>
</evidence>
<evidence type="ECO:0000305" key="3"/>
<evidence type="ECO:0000305" key="4">
    <source>
    </source>
</evidence>
<sequence length="430" mass="43013">MPSSPSSTTPAPTSTPAARREPSGKGPSGAAARLFLPLIALCTAVTAANIYLAAPLLPLIAHDMGSTPSAVAWLASVAQLGYAAGLLFFAPLGDSVNRRRLVAALSLVATAALLTAAASAGTGALAGAVLVASAATVVPQLLVPLVAERAPADRRARHVAAVIAGLFTGVVAARVLGGLAGQAFGWRAVFVGAAVLTAVLGLATAYILPVERRQRRGPLFAGLVAIPGLVRRSPDLWRACVRQAGMYGAWSALWTSLALLLTEGEGYGMTTAAAGLFGLFGLAASVVAPLAGGLVDRFGAAKVVRSAYALAALSVPLFWLGGQVMAALCAAAVLVHAALVASHVANQTLALTTTSAPATANTAYVVAGFAGGALASALAGPAFGHWGWGGVCAVAGAWLVLGWTATAVRPARSARSARSARSVRSVRSAR</sequence>
<proteinExistence type="evidence at transcript level"/>
<dbReference type="EMBL" id="AL939118">
    <property type="protein sequence ID" value="CAC32347.1"/>
    <property type="molecule type" value="Genomic_DNA"/>
</dbReference>
<dbReference type="RefSeq" id="NP_628189.1">
    <property type="nucleotide sequence ID" value="NC_003888.3"/>
</dbReference>
<dbReference type="RefSeq" id="WP_011029377.1">
    <property type="nucleotide sequence ID" value="NZ_VNID01000032.1"/>
</dbReference>
<dbReference type="SMR" id="Q9ADP8"/>
<dbReference type="STRING" id="100226.gene:17761635"/>
<dbReference type="TCDB" id="2.A.1.36.4">
    <property type="family name" value="the major facilitator superfamily (mfs)"/>
</dbReference>
<dbReference type="PaxDb" id="100226-SCO4007"/>
<dbReference type="KEGG" id="sco:SCO4007"/>
<dbReference type="PATRIC" id="fig|100226.15.peg.4070"/>
<dbReference type="eggNOG" id="COG2814">
    <property type="taxonomic scope" value="Bacteria"/>
</dbReference>
<dbReference type="HOGENOM" id="CLU_001265_23_0_11"/>
<dbReference type="InParanoid" id="Q9ADP8"/>
<dbReference type="OrthoDB" id="9815356at2"/>
<dbReference type="PhylomeDB" id="Q9ADP8"/>
<dbReference type="Proteomes" id="UP000001973">
    <property type="component" value="Chromosome"/>
</dbReference>
<dbReference type="GO" id="GO:0005886">
    <property type="term" value="C:plasma membrane"/>
    <property type="evidence" value="ECO:0007669"/>
    <property type="project" value="UniProtKB-SubCell"/>
</dbReference>
<dbReference type="GO" id="GO:0022857">
    <property type="term" value="F:transmembrane transporter activity"/>
    <property type="evidence" value="ECO:0007669"/>
    <property type="project" value="InterPro"/>
</dbReference>
<dbReference type="CDD" id="cd17324">
    <property type="entry name" value="MFS_NepI_like"/>
    <property type="match status" value="1"/>
</dbReference>
<dbReference type="Gene3D" id="1.20.1250.20">
    <property type="entry name" value="MFS general substrate transporter like domains"/>
    <property type="match status" value="1"/>
</dbReference>
<dbReference type="InterPro" id="IPR011701">
    <property type="entry name" value="MFS"/>
</dbReference>
<dbReference type="InterPro" id="IPR020846">
    <property type="entry name" value="MFS_dom"/>
</dbReference>
<dbReference type="InterPro" id="IPR036259">
    <property type="entry name" value="MFS_trans_sf"/>
</dbReference>
<dbReference type="PANTHER" id="PTHR42910:SF1">
    <property type="entry name" value="MAJOR FACILITATOR SUPERFAMILY (MFS) PROFILE DOMAIN-CONTAINING PROTEIN"/>
    <property type="match status" value="1"/>
</dbReference>
<dbReference type="PANTHER" id="PTHR42910">
    <property type="entry name" value="TRANSPORTER SCO4007-RELATED"/>
    <property type="match status" value="1"/>
</dbReference>
<dbReference type="Pfam" id="PF07690">
    <property type="entry name" value="MFS_1"/>
    <property type="match status" value="1"/>
</dbReference>
<dbReference type="SUPFAM" id="SSF103473">
    <property type="entry name" value="MFS general substrate transporter"/>
    <property type="match status" value="1"/>
</dbReference>
<dbReference type="PROSITE" id="PS50850">
    <property type="entry name" value="MFS"/>
    <property type="match status" value="1"/>
</dbReference>
<gene>
    <name type="ordered locus">SCO4007</name>
</gene>